<dbReference type="EMBL" id="CP000087">
    <property type="protein sequence ID" value="ABE05144.1"/>
    <property type="molecule type" value="Genomic_DNA"/>
</dbReference>
<dbReference type="RefSeq" id="WP_011477722.1">
    <property type="nucleotide sequence ID" value="NC_007940.1"/>
</dbReference>
<dbReference type="SMR" id="Q1RHM0"/>
<dbReference type="KEGG" id="rbe:RBE_1063"/>
<dbReference type="eggNOG" id="COG0051">
    <property type="taxonomic scope" value="Bacteria"/>
</dbReference>
<dbReference type="HOGENOM" id="CLU_122625_1_3_5"/>
<dbReference type="OrthoDB" id="9804464at2"/>
<dbReference type="Proteomes" id="UP000001951">
    <property type="component" value="Chromosome"/>
</dbReference>
<dbReference type="GO" id="GO:1990904">
    <property type="term" value="C:ribonucleoprotein complex"/>
    <property type="evidence" value="ECO:0007669"/>
    <property type="project" value="UniProtKB-KW"/>
</dbReference>
<dbReference type="GO" id="GO:0005840">
    <property type="term" value="C:ribosome"/>
    <property type="evidence" value="ECO:0007669"/>
    <property type="project" value="UniProtKB-KW"/>
</dbReference>
<dbReference type="GO" id="GO:0003735">
    <property type="term" value="F:structural constituent of ribosome"/>
    <property type="evidence" value="ECO:0007669"/>
    <property type="project" value="InterPro"/>
</dbReference>
<dbReference type="GO" id="GO:0000049">
    <property type="term" value="F:tRNA binding"/>
    <property type="evidence" value="ECO:0007669"/>
    <property type="project" value="UniProtKB-UniRule"/>
</dbReference>
<dbReference type="GO" id="GO:0006412">
    <property type="term" value="P:translation"/>
    <property type="evidence" value="ECO:0007669"/>
    <property type="project" value="UniProtKB-UniRule"/>
</dbReference>
<dbReference type="FunFam" id="3.30.70.600:FF:000003">
    <property type="entry name" value="30S ribosomal protein S10"/>
    <property type="match status" value="1"/>
</dbReference>
<dbReference type="Gene3D" id="3.30.70.600">
    <property type="entry name" value="Ribosomal protein S10 domain"/>
    <property type="match status" value="1"/>
</dbReference>
<dbReference type="HAMAP" id="MF_00508">
    <property type="entry name" value="Ribosomal_uS10"/>
    <property type="match status" value="1"/>
</dbReference>
<dbReference type="InterPro" id="IPR001848">
    <property type="entry name" value="Ribosomal_uS10"/>
</dbReference>
<dbReference type="InterPro" id="IPR027486">
    <property type="entry name" value="Ribosomal_uS10_dom"/>
</dbReference>
<dbReference type="InterPro" id="IPR036838">
    <property type="entry name" value="Ribosomal_uS10_dom_sf"/>
</dbReference>
<dbReference type="NCBIfam" id="NF001861">
    <property type="entry name" value="PRK00596.1"/>
    <property type="match status" value="1"/>
</dbReference>
<dbReference type="NCBIfam" id="TIGR01049">
    <property type="entry name" value="rpsJ_bact"/>
    <property type="match status" value="1"/>
</dbReference>
<dbReference type="PANTHER" id="PTHR11700">
    <property type="entry name" value="30S RIBOSOMAL PROTEIN S10 FAMILY MEMBER"/>
    <property type="match status" value="1"/>
</dbReference>
<dbReference type="Pfam" id="PF00338">
    <property type="entry name" value="Ribosomal_S10"/>
    <property type="match status" value="1"/>
</dbReference>
<dbReference type="PRINTS" id="PR00971">
    <property type="entry name" value="RIBOSOMALS10"/>
</dbReference>
<dbReference type="SMART" id="SM01403">
    <property type="entry name" value="Ribosomal_S10"/>
    <property type="match status" value="1"/>
</dbReference>
<dbReference type="SUPFAM" id="SSF54999">
    <property type="entry name" value="Ribosomal protein S10"/>
    <property type="match status" value="1"/>
</dbReference>
<protein>
    <recommendedName>
        <fullName evidence="1">Small ribosomal subunit protein uS10</fullName>
    </recommendedName>
    <alternativeName>
        <fullName evidence="2">30S ribosomal protein S10</fullName>
    </alternativeName>
</protein>
<gene>
    <name evidence="1" type="primary">rpsJ</name>
    <name type="ordered locus">RBE_1063</name>
</gene>
<comment type="function">
    <text evidence="1">Involved in the binding of tRNA to the ribosomes.</text>
</comment>
<comment type="subunit">
    <text evidence="1">Part of the 30S ribosomal subunit.</text>
</comment>
<comment type="similarity">
    <text evidence="1">Belongs to the universal ribosomal protein uS10 family.</text>
</comment>
<feature type="chain" id="PRO_0000258569" description="Small ribosomal subunit protein uS10">
    <location>
        <begin position="1"/>
        <end position="105"/>
    </location>
</feature>
<name>RS10_RICBR</name>
<keyword id="KW-0687">Ribonucleoprotein</keyword>
<keyword id="KW-0689">Ribosomal protein</keyword>
<evidence type="ECO:0000255" key="1">
    <source>
        <dbReference type="HAMAP-Rule" id="MF_00508"/>
    </source>
</evidence>
<evidence type="ECO:0000305" key="2"/>
<reference key="1">
    <citation type="journal article" date="2006" name="PLoS Genet.">
        <title>Genome sequence of Rickettsia bellii illuminates the role of amoebae in gene exchanges between intracellular pathogens.</title>
        <authorList>
            <person name="Ogata H."/>
            <person name="La Scola B."/>
            <person name="Audic S."/>
            <person name="Renesto P."/>
            <person name="Blanc G."/>
            <person name="Robert C."/>
            <person name="Fournier P.-E."/>
            <person name="Claverie J.-M."/>
            <person name="Raoult D."/>
        </authorList>
    </citation>
    <scope>NUCLEOTIDE SEQUENCE [LARGE SCALE GENOMIC DNA]</scope>
    <source>
        <strain>RML369-C</strain>
    </source>
</reference>
<proteinExistence type="inferred from homology"/>
<sequence>MKNKIKIRLKSFDHRSLDQATKEIVSAVKRTFANISGPIPLPRKIQRFTVNRSPHVHIKSREQYEIRTQKRLLVIDDPNPVVVDALSKVDLAAGVDVVIELESGE</sequence>
<accession>Q1RHM0</accession>
<organism>
    <name type="scientific">Rickettsia bellii (strain RML369-C)</name>
    <dbReference type="NCBI Taxonomy" id="336407"/>
    <lineage>
        <taxon>Bacteria</taxon>
        <taxon>Pseudomonadati</taxon>
        <taxon>Pseudomonadota</taxon>
        <taxon>Alphaproteobacteria</taxon>
        <taxon>Rickettsiales</taxon>
        <taxon>Rickettsiaceae</taxon>
        <taxon>Rickettsieae</taxon>
        <taxon>Rickettsia</taxon>
        <taxon>belli group</taxon>
    </lineage>
</organism>